<organism>
    <name type="scientific">Yersinia pseudotuberculosis serotype IB (strain PB1/+)</name>
    <dbReference type="NCBI Taxonomy" id="502801"/>
    <lineage>
        <taxon>Bacteria</taxon>
        <taxon>Pseudomonadati</taxon>
        <taxon>Pseudomonadota</taxon>
        <taxon>Gammaproteobacteria</taxon>
        <taxon>Enterobacterales</taxon>
        <taxon>Yersiniaceae</taxon>
        <taxon>Yersinia</taxon>
    </lineage>
</organism>
<keyword id="KW-0408">Iron</keyword>
<keyword id="KW-0479">Metal-binding</keyword>
<evidence type="ECO:0000255" key="1">
    <source>
        <dbReference type="HAMAP-Rule" id="MF_00142"/>
    </source>
</evidence>
<name>CYAY_YERPB</name>
<gene>
    <name evidence="1" type="primary">cyaY</name>
    <name type="ordered locus">YPTS_0201</name>
</gene>
<protein>
    <recommendedName>
        <fullName evidence="1">Iron-sulfur cluster assembly protein CyaY</fullName>
    </recommendedName>
</protein>
<reference key="1">
    <citation type="submission" date="2008-04" db="EMBL/GenBank/DDBJ databases">
        <title>Complete sequence of Yersinia pseudotuberculosis PB1/+.</title>
        <authorList>
            <person name="Copeland A."/>
            <person name="Lucas S."/>
            <person name="Lapidus A."/>
            <person name="Glavina del Rio T."/>
            <person name="Dalin E."/>
            <person name="Tice H."/>
            <person name="Bruce D."/>
            <person name="Goodwin L."/>
            <person name="Pitluck S."/>
            <person name="Munk A.C."/>
            <person name="Brettin T."/>
            <person name="Detter J.C."/>
            <person name="Han C."/>
            <person name="Tapia R."/>
            <person name="Schmutz J."/>
            <person name="Larimer F."/>
            <person name="Land M."/>
            <person name="Hauser L."/>
            <person name="Challacombe J.F."/>
            <person name="Green L."/>
            <person name="Lindler L.E."/>
            <person name="Nikolich M.P."/>
            <person name="Richardson P."/>
        </authorList>
    </citation>
    <scope>NUCLEOTIDE SEQUENCE [LARGE SCALE GENOMIC DNA]</scope>
    <source>
        <strain>PB1/+</strain>
    </source>
</reference>
<feature type="chain" id="PRO_1000096261" description="Iron-sulfur cluster assembly protein CyaY">
    <location>
        <begin position="1"/>
        <end position="107"/>
    </location>
</feature>
<accession>B2K070</accession>
<comment type="function">
    <text evidence="1">Involved in iron-sulfur (Fe-S) cluster assembly. May act as a regulator of Fe-S biogenesis.</text>
</comment>
<comment type="similarity">
    <text evidence="1">Belongs to the frataxin family.</text>
</comment>
<proteinExistence type="inferred from homology"/>
<sequence length="107" mass="12126">MNDSEFHQLADQLMLYIEETLDGFTGDSDIDYETNGGVMTLTFENGSKIVINRQEPLHQVWLATKAGGYHFNYRDGHWYCSRSGEEFFAKLSEAATTQAGEEVSFSE</sequence>
<dbReference type="EMBL" id="CP001048">
    <property type="protein sequence ID" value="ACC87198.1"/>
    <property type="molecule type" value="Genomic_DNA"/>
</dbReference>
<dbReference type="RefSeq" id="WP_011191510.1">
    <property type="nucleotide sequence ID" value="NZ_CP009780.1"/>
</dbReference>
<dbReference type="SMR" id="B2K070"/>
<dbReference type="GeneID" id="49787831"/>
<dbReference type="KEGG" id="ypb:YPTS_0201"/>
<dbReference type="PATRIC" id="fig|502801.10.peg.3880"/>
<dbReference type="GO" id="GO:0005829">
    <property type="term" value="C:cytosol"/>
    <property type="evidence" value="ECO:0007669"/>
    <property type="project" value="TreeGrafter"/>
</dbReference>
<dbReference type="GO" id="GO:0008199">
    <property type="term" value="F:ferric iron binding"/>
    <property type="evidence" value="ECO:0007669"/>
    <property type="project" value="InterPro"/>
</dbReference>
<dbReference type="GO" id="GO:0008198">
    <property type="term" value="F:ferrous iron binding"/>
    <property type="evidence" value="ECO:0007669"/>
    <property type="project" value="TreeGrafter"/>
</dbReference>
<dbReference type="GO" id="GO:0016226">
    <property type="term" value="P:iron-sulfur cluster assembly"/>
    <property type="evidence" value="ECO:0007669"/>
    <property type="project" value="UniProtKB-UniRule"/>
</dbReference>
<dbReference type="CDD" id="cd00503">
    <property type="entry name" value="Frataxin"/>
    <property type="match status" value="1"/>
</dbReference>
<dbReference type="FunFam" id="3.30.920.10:FF:000001">
    <property type="entry name" value="Iron-sulfur cluster assembly protein CyaY"/>
    <property type="match status" value="1"/>
</dbReference>
<dbReference type="Gene3D" id="3.30.920.10">
    <property type="entry name" value="Frataxin/CyaY"/>
    <property type="match status" value="1"/>
</dbReference>
<dbReference type="HAMAP" id="MF_00142">
    <property type="entry name" value="CyaY"/>
    <property type="match status" value="1"/>
</dbReference>
<dbReference type="InterPro" id="IPR047584">
    <property type="entry name" value="CyaY"/>
</dbReference>
<dbReference type="InterPro" id="IPR002908">
    <property type="entry name" value="Frataxin/CyaY"/>
</dbReference>
<dbReference type="InterPro" id="IPR036524">
    <property type="entry name" value="Frataxin/CyaY_sf"/>
</dbReference>
<dbReference type="InterPro" id="IPR020895">
    <property type="entry name" value="Frataxin_CS"/>
</dbReference>
<dbReference type="NCBIfam" id="TIGR03421">
    <property type="entry name" value="FeS_CyaY"/>
    <property type="match status" value="1"/>
</dbReference>
<dbReference type="PANTHER" id="PTHR16821">
    <property type="entry name" value="FRATAXIN"/>
    <property type="match status" value="1"/>
</dbReference>
<dbReference type="PANTHER" id="PTHR16821:SF2">
    <property type="entry name" value="FRATAXIN, MITOCHONDRIAL"/>
    <property type="match status" value="1"/>
</dbReference>
<dbReference type="Pfam" id="PF01491">
    <property type="entry name" value="Frataxin_Cyay"/>
    <property type="match status" value="1"/>
</dbReference>
<dbReference type="SMART" id="SM01219">
    <property type="entry name" value="Frataxin_Cyay"/>
    <property type="match status" value="1"/>
</dbReference>
<dbReference type="SUPFAM" id="SSF55387">
    <property type="entry name" value="Frataxin/Nqo15-like"/>
    <property type="match status" value="1"/>
</dbReference>
<dbReference type="PROSITE" id="PS01344">
    <property type="entry name" value="FRATAXIN_1"/>
    <property type="match status" value="1"/>
</dbReference>
<dbReference type="PROSITE" id="PS50810">
    <property type="entry name" value="FRATAXIN_2"/>
    <property type="match status" value="1"/>
</dbReference>